<feature type="chain" id="PRO_0000128987" description="DNA-directed RNA polymerase subunit omega">
    <location>
        <begin position="1"/>
        <end position="103"/>
    </location>
</feature>
<evidence type="ECO:0000255" key="1">
    <source>
        <dbReference type="HAMAP-Rule" id="MF_00366"/>
    </source>
</evidence>
<reference key="1">
    <citation type="journal article" date="2002" name="Mol. Microbiol.">
        <title>Genome sequence of Streptococcus agalactiae, a pathogen causing invasive neonatal disease.</title>
        <authorList>
            <person name="Glaser P."/>
            <person name="Rusniok C."/>
            <person name="Buchrieser C."/>
            <person name="Chevalier F."/>
            <person name="Frangeul L."/>
            <person name="Msadek T."/>
            <person name="Zouine M."/>
            <person name="Couve E."/>
            <person name="Lalioui L."/>
            <person name="Poyart C."/>
            <person name="Trieu-Cuot P."/>
            <person name="Kunst F."/>
        </authorList>
    </citation>
    <scope>NUCLEOTIDE SEQUENCE [LARGE SCALE GENOMIC DNA]</scope>
    <source>
        <strain>NEM316</strain>
    </source>
</reference>
<sequence>MLKPSIDTLLDKVPSKYSLVILQAKRAHELEAGEKATQDFKSVKSTLRALEEIESGNVVIHPDPSAKRASVRARIEAERLAKEEEERKIKEQIAKEKEDGEKI</sequence>
<proteinExistence type="inferred from homology"/>
<dbReference type="EC" id="2.7.7.6" evidence="1"/>
<dbReference type="EMBL" id="AL766844">
    <property type="protein sequence ID" value="CAD45947.1"/>
    <property type="molecule type" value="Genomic_DNA"/>
</dbReference>
<dbReference type="SMR" id="P66728"/>
<dbReference type="KEGG" id="san:gbs0302"/>
<dbReference type="eggNOG" id="COG1758">
    <property type="taxonomic scope" value="Bacteria"/>
</dbReference>
<dbReference type="HOGENOM" id="CLU_125406_0_0_9"/>
<dbReference type="Proteomes" id="UP000000823">
    <property type="component" value="Chromosome"/>
</dbReference>
<dbReference type="GO" id="GO:0000428">
    <property type="term" value="C:DNA-directed RNA polymerase complex"/>
    <property type="evidence" value="ECO:0007669"/>
    <property type="project" value="UniProtKB-KW"/>
</dbReference>
<dbReference type="GO" id="GO:0003677">
    <property type="term" value="F:DNA binding"/>
    <property type="evidence" value="ECO:0007669"/>
    <property type="project" value="UniProtKB-UniRule"/>
</dbReference>
<dbReference type="GO" id="GO:0003899">
    <property type="term" value="F:DNA-directed RNA polymerase activity"/>
    <property type="evidence" value="ECO:0007669"/>
    <property type="project" value="UniProtKB-UniRule"/>
</dbReference>
<dbReference type="GO" id="GO:0006351">
    <property type="term" value="P:DNA-templated transcription"/>
    <property type="evidence" value="ECO:0007669"/>
    <property type="project" value="UniProtKB-UniRule"/>
</dbReference>
<dbReference type="Gene3D" id="3.90.940.10">
    <property type="match status" value="1"/>
</dbReference>
<dbReference type="HAMAP" id="MF_00366">
    <property type="entry name" value="RNApol_bact_RpoZ"/>
    <property type="match status" value="1"/>
</dbReference>
<dbReference type="InterPro" id="IPR003716">
    <property type="entry name" value="DNA-dir_RNA_pol_omega"/>
</dbReference>
<dbReference type="InterPro" id="IPR006110">
    <property type="entry name" value="Pol_omega/Rpo6/RPB6"/>
</dbReference>
<dbReference type="InterPro" id="IPR036161">
    <property type="entry name" value="RPB6/omega-like_sf"/>
</dbReference>
<dbReference type="NCBIfam" id="TIGR00690">
    <property type="entry name" value="rpoZ"/>
    <property type="match status" value="1"/>
</dbReference>
<dbReference type="PANTHER" id="PTHR34476">
    <property type="entry name" value="DNA-DIRECTED RNA POLYMERASE SUBUNIT OMEGA"/>
    <property type="match status" value="1"/>
</dbReference>
<dbReference type="PANTHER" id="PTHR34476:SF1">
    <property type="entry name" value="DNA-DIRECTED RNA POLYMERASE SUBUNIT OMEGA"/>
    <property type="match status" value="1"/>
</dbReference>
<dbReference type="Pfam" id="PF01192">
    <property type="entry name" value="RNA_pol_Rpb6"/>
    <property type="match status" value="1"/>
</dbReference>
<dbReference type="SMART" id="SM01409">
    <property type="entry name" value="RNA_pol_Rpb6"/>
    <property type="match status" value="1"/>
</dbReference>
<dbReference type="SUPFAM" id="SSF63562">
    <property type="entry name" value="RPB6/omega subunit-like"/>
    <property type="match status" value="1"/>
</dbReference>
<gene>
    <name evidence="1" type="primary">rpoZ</name>
    <name type="ordered locus">gbs0302</name>
</gene>
<protein>
    <recommendedName>
        <fullName evidence="1">DNA-directed RNA polymerase subunit omega</fullName>
        <shortName evidence="1">RNAP omega subunit</shortName>
        <ecNumber evidence="1">2.7.7.6</ecNumber>
    </recommendedName>
    <alternativeName>
        <fullName evidence="1">RNA polymerase omega subunit</fullName>
    </alternativeName>
    <alternativeName>
        <fullName evidence="1">Transcriptase subunit omega</fullName>
    </alternativeName>
</protein>
<accession>P66728</accession>
<accession>Q8E1P0</accession>
<accession>Q8E755</accession>
<comment type="function">
    <text evidence="1">Promotes RNA polymerase assembly. Latches the N- and C-terminal regions of the beta' subunit thereby facilitating its interaction with the beta and alpha subunits.</text>
</comment>
<comment type="catalytic activity">
    <reaction evidence="1">
        <text>RNA(n) + a ribonucleoside 5'-triphosphate = RNA(n+1) + diphosphate</text>
        <dbReference type="Rhea" id="RHEA:21248"/>
        <dbReference type="Rhea" id="RHEA-COMP:14527"/>
        <dbReference type="Rhea" id="RHEA-COMP:17342"/>
        <dbReference type="ChEBI" id="CHEBI:33019"/>
        <dbReference type="ChEBI" id="CHEBI:61557"/>
        <dbReference type="ChEBI" id="CHEBI:140395"/>
        <dbReference type="EC" id="2.7.7.6"/>
    </reaction>
</comment>
<comment type="subunit">
    <text evidence="1">The RNAP catalytic core consists of 2 alpha, 1 beta, 1 beta' and 1 omega subunit. When a sigma factor is associated with the core the holoenzyme is formed, which can initiate transcription.</text>
</comment>
<comment type="similarity">
    <text evidence="1">Belongs to the RNA polymerase subunit omega family.</text>
</comment>
<organism>
    <name type="scientific">Streptococcus agalactiae serotype III (strain NEM316)</name>
    <dbReference type="NCBI Taxonomy" id="211110"/>
    <lineage>
        <taxon>Bacteria</taxon>
        <taxon>Bacillati</taxon>
        <taxon>Bacillota</taxon>
        <taxon>Bacilli</taxon>
        <taxon>Lactobacillales</taxon>
        <taxon>Streptococcaceae</taxon>
        <taxon>Streptococcus</taxon>
    </lineage>
</organism>
<name>RPOZ_STRA3</name>
<keyword id="KW-0240">DNA-directed RNA polymerase</keyword>
<keyword id="KW-0548">Nucleotidyltransferase</keyword>
<keyword id="KW-0804">Transcription</keyword>
<keyword id="KW-0808">Transferase</keyword>